<protein>
    <recommendedName>
        <fullName evidence="2">Uncharacterized protein C20orf202</fullName>
    </recommendedName>
</protein>
<organism>
    <name type="scientific">Homo sapiens</name>
    <name type="common">Human</name>
    <dbReference type="NCBI Taxonomy" id="9606"/>
    <lineage>
        <taxon>Eukaryota</taxon>
        <taxon>Metazoa</taxon>
        <taxon>Chordata</taxon>
        <taxon>Craniata</taxon>
        <taxon>Vertebrata</taxon>
        <taxon>Euteleostomi</taxon>
        <taxon>Mammalia</taxon>
        <taxon>Eutheria</taxon>
        <taxon>Euarchontoglires</taxon>
        <taxon>Primates</taxon>
        <taxon>Haplorrhini</taxon>
        <taxon>Catarrhini</taxon>
        <taxon>Hominidae</taxon>
        <taxon>Homo</taxon>
    </lineage>
</organism>
<gene>
    <name evidence="3" type="primary">C20orf202</name>
</gene>
<comment type="interaction">
    <interactant intactId="EBI-18396958">
        <id>A1L168</id>
    </interactant>
    <interactant intactId="EBI-11096309">
        <id>Q9NYB9-2</id>
        <label>ABI2</label>
    </interactant>
    <organismsDiffer>false</organismsDiffer>
    <experiments>3</experiments>
</comment>
<comment type="interaction">
    <interactant intactId="EBI-18396958">
        <id>A1L168</id>
    </interactant>
    <interactant intactId="EBI-10171570">
        <id>Q68D86</id>
        <label>CCDC102B</label>
    </interactant>
    <organismsDiffer>false</organismsDiffer>
    <experiments>3</experiments>
</comment>
<comment type="interaction">
    <interactant intactId="EBI-18396958">
        <id>A1L168</id>
    </interactant>
    <interactant intactId="EBI-1046507">
        <id>O60812</id>
        <label>HNRNPCL1</label>
    </interactant>
    <organismsDiffer>false</organismsDiffer>
    <experiments>3</experiments>
</comment>
<comment type="interaction">
    <interactant intactId="EBI-18396958">
        <id>A1L168</id>
    </interactant>
    <interactant intactId="EBI-1004115">
        <id>Q15691</id>
        <label>MAPRE1</label>
    </interactant>
    <organismsDiffer>false</organismsDiffer>
    <experiments>3</experiments>
</comment>
<comment type="interaction">
    <interactant intactId="EBI-18396958">
        <id>A1L168</id>
    </interactant>
    <interactant intactId="EBI-726739">
        <id>Q9UPY8</id>
        <label>MAPRE3</label>
    </interactant>
    <organismsDiffer>false</organismsDiffer>
    <experiments>3</experiments>
</comment>
<comment type="interaction">
    <interactant intactId="EBI-18396958">
        <id>A1L168</id>
    </interactant>
    <interactant intactId="EBI-743117">
        <id>Q96ES7</id>
        <label>SGF29</label>
    </interactant>
    <organismsDiffer>false</organismsDiffer>
    <experiments>3</experiments>
</comment>
<comment type="interaction">
    <interactant intactId="EBI-18396958">
        <id>A1L168</id>
    </interactant>
    <interactant intactId="EBI-296723">
        <id>O95295</id>
        <label>SNAPIN</label>
    </interactant>
    <organismsDiffer>false</organismsDiffer>
    <experiments>3</experiments>
</comment>
<comment type="interaction">
    <interactant intactId="EBI-18396958">
        <id>A1L168</id>
    </interactant>
    <interactant intactId="EBI-712969">
        <id>Q9Y3C0</id>
        <label>WASHC3</label>
    </interactant>
    <organismsDiffer>false</organismsDiffer>
    <experiments>3</experiments>
</comment>
<comment type="sequence caution" evidence="2">
    <conflict type="erroneous initiation">
        <sequence resource="EMBL-CDS" id="AAI27731"/>
    </conflict>
    <text>Extended N-terminus.</text>
</comment>
<comment type="sequence caution" evidence="2">
    <conflict type="erroneous initiation">
        <sequence resource="EMBL-CDS" id="AAI27732"/>
    </conflict>
    <text>Extended N-terminus.</text>
</comment>
<keyword id="KW-1185">Reference proteome</keyword>
<sequence>MKIAEEPSPSLGQTLEWLRKELSEMQIQDQSLLLTLRHLHSVLEELRADSAHWEDARSSGGTSPIRARAGSEGRGCQPVCSRGLAQLLRGEDSRRSSLP</sequence>
<evidence type="ECO:0000256" key="1">
    <source>
        <dbReference type="SAM" id="MobiDB-lite"/>
    </source>
</evidence>
<evidence type="ECO:0000305" key="2"/>
<evidence type="ECO:0000312" key="3">
    <source>
        <dbReference type="HGNC" id="HGNC:37254"/>
    </source>
</evidence>
<name>CT202_HUMAN</name>
<accession>A1L168</accession>
<dbReference type="EMBL" id="AK092524">
    <property type="status" value="NOT_ANNOTATED_CDS"/>
    <property type="molecule type" value="mRNA"/>
</dbReference>
<dbReference type="EMBL" id="AL031665">
    <property type="status" value="NOT_ANNOTATED_CDS"/>
    <property type="molecule type" value="Genomic_DNA"/>
</dbReference>
<dbReference type="EMBL" id="BC127730">
    <property type="protein sequence ID" value="AAI27731.1"/>
    <property type="status" value="ALT_INIT"/>
    <property type="molecule type" value="mRNA"/>
</dbReference>
<dbReference type="EMBL" id="BC127731">
    <property type="protein sequence ID" value="AAI27732.1"/>
    <property type="status" value="ALT_INIT"/>
    <property type="molecule type" value="mRNA"/>
</dbReference>
<dbReference type="CCDS" id="CCDS46567.2"/>
<dbReference type="RefSeq" id="NP_001381887.1">
    <property type="nucleotide sequence ID" value="NM_001394958.1"/>
</dbReference>
<dbReference type="SMR" id="A1L168"/>
<dbReference type="BioGRID" id="134778">
    <property type="interactions" value="8"/>
</dbReference>
<dbReference type="IntAct" id="A1L168">
    <property type="interactions" value="8"/>
</dbReference>
<dbReference type="BioMuta" id="C20orf202"/>
<dbReference type="jPOST" id="A1L168"/>
<dbReference type="PaxDb" id="9606-ENSP00000383474"/>
<dbReference type="ProteomicsDB" id="133"/>
<dbReference type="Antibodypedia" id="48590">
    <property type="antibodies" value="18 antibodies from 5 providers"/>
</dbReference>
<dbReference type="DNASU" id="400831"/>
<dbReference type="Ensembl" id="ENST00000400633.3">
    <property type="protein sequence ID" value="ENSP00000383474.2"/>
    <property type="gene ID" value="ENSG00000215595.3"/>
</dbReference>
<dbReference type="GeneID" id="400831"/>
<dbReference type="MANE-Select" id="ENST00000400633.3">
    <property type="protein sequence ID" value="ENSP00000383474.2"/>
    <property type="RefSeq nucleotide sequence ID" value="NM_001394958.1"/>
    <property type="RefSeq protein sequence ID" value="NP_001381887.1"/>
</dbReference>
<dbReference type="UCSC" id="uc002wer.4">
    <property type="organism name" value="human"/>
</dbReference>
<dbReference type="AGR" id="HGNC:37254"/>
<dbReference type="GeneCards" id="C20orf202"/>
<dbReference type="HGNC" id="HGNC:37254">
    <property type="gene designation" value="C20orf202"/>
</dbReference>
<dbReference type="HPA" id="ENSG00000215595">
    <property type="expression patterns" value="Tissue enhanced (placenta)"/>
</dbReference>
<dbReference type="neXtProt" id="NX_A1L168"/>
<dbReference type="PharmGKB" id="PA165392338"/>
<dbReference type="VEuPathDB" id="HostDB:ENSG00000215595"/>
<dbReference type="eggNOG" id="ENOG502SDCS">
    <property type="taxonomic scope" value="Eukaryota"/>
</dbReference>
<dbReference type="GeneTree" id="ENSGT00490000044517"/>
<dbReference type="HOGENOM" id="CLU_2066753_0_0_1"/>
<dbReference type="InParanoid" id="A1L168"/>
<dbReference type="OrthoDB" id="9799696at2759"/>
<dbReference type="PAN-GO" id="A1L168">
    <property type="GO annotations" value="0 GO annotations based on evolutionary models"/>
</dbReference>
<dbReference type="PhylomeDB" id="A1L168"/>
<dbReference type="PathwayCommons" id="A1L168"/>
<dbReference type="SignaLink" id="A1L168"/>
<dbReference type="BioGRID-ORCS" id="400831">
    <property type="hits" value="18 hits in 1115 CRISPR screens"/>
</dbReference>
<dbReference type="GenomeRNAi" id="400831"/>
<dbReference type="Pharos" id="A1L168">
    <property type="development level" value="Tdark"/>
</dbReference>
<dbReference type="PRO" id="PR:A1L168"/>
<dbReference type="Proteomes" id="UP000005640">
    <property type="component" value="Chromosome 20"/>
</dbReference>
<dbReference type="RNAct" id="A1L168">
    <property type="molecule type" value="protein"/>
</dbReference>
<dbReference type="Bgee" id="ENSG00000215595">
    <property type="expression patterns" value="Expressed in male germ line stem cell (sensu Vertebrata) in testis and 91 other cell types or tissues"/>
</dbReference>
<dbReference type="InterPro" id="IPR051771">
    <property type="entry name" value="FAM167_domain"/>
</dbReference>
<dbReference type="PANTHER" id="PTHR32289">
    <property type="entry name" value="PROTEIN FAM167A"/>
    <property type="match status" value="1"/>
</dbReference>
<dbReference type="PANTHER" id="PTHR32289:SF5">
    <property type="entry name" value="TRANSMEMBRANE 74B, OPPOSITE STRAND"/>
    <property type="match status" value="1"/>
</dbReference>
<feature type="chain" id="PRO_0000334676" description="Uncharacterized protein C20orf202">
    <location>
        <begin position="1"/>
        <end position="99"/>
    </location>
</feature>
<feature type="region of interest" description="Disordered" evidence="1">
    <location>
        <begin position="50"/>
        <end position="77"/>
    </location>
</feature>
<proteinExistence type="evidence at protein level"/>
<reference key="1">
    <citation type="journal article" date="2004" name="Nat. Genet.">
        <title>Complete sequencing and characterization of 21,243 full-length human cDNAs.</title>
        <authorList>
            <person name="Ota T."/>
            <person name="Suzuki Y."/>
            <person name="Nishikawa T."/>
            <person name="Otsuki T."/>
            <person name="Sugiyama T."/>
            <person name="Irie R."/>
            <person name="Wakamatsu A."/>
            <person name="Hayashi K."/>
            <person name="Sato H."/>
            <person name="Nagai K."/>
            <person name="Kimura K."/>
            <person name="Makita H."/>
            <person name="Sekine M."/>
            <person name="Obayashi M."/>
            <person name="Nishi T."/>
            <person name="Shibahara T."/>
            <person name="Tanaka T."/>
            <person name="Ishii S."/>
            <person name="Yamamoto J."/>
            <person name="Saito K."/>
            <person name="Kawai Y."/>
            <person name="Isono Y."/>
            <person name="Nakamura Y."/>
            <person name="Nagahari K."/>
            <person name="Murakami K."/>
            <person name="Yasuda T."/>
            <person name="Iwayanagi T."/>
            <person name="Wagatsuma M."/>
            <person name="Shiratori A."/>
            <person name="Sudo H."/>
            <person name="Hosoiri T."/>
            <person name="Kaku Y."/>
            <person name="Kodaira H."/>
            <person name="Kondo H."/>
            <person name="Sugawara M."/>
            <person name="Takahashi M."/>
            <person name="Kanda K."/>
            <person name="Yokoi T."/>
            <person name="Furuya T."/>
            <person name="Kikkawa E."/>
            <person name="Omura Y."/>
            <person name="Abe K."/>
            <person name="Kamihara K."/>
            <person name="Katsuta N."/>
            <person name="Sato K."/>
            <person name="Tanikawa M."/>
            <person name="Yamazaki M."/>
            <person name="Ninomiya K."/>
            <person name="Ishibashi T."/>
            <person name="Yamashita H."/>
            <person name="Murakawa K."/>
            <person name="Fujimori K."/>
            <person name="Tanai H."/>
            <person name="Kimata M."/>
            <person name="Watanabe M."/>
            <person name="Hiraoka S."/>
            <person name="Chiba Y."/>
            <person name="Ishida S."/>
            <person name="Ono Y."/>
            <person name="Takiguchi S."/>
            <person name="Watanabe S."/>
            <person name="Yosida M."/>
            <person name="Hotuta T."/>
            <person name="Kusano J."/>
            <person name="Kanehori K."/>
            <person name="Takahashi-Fujii A."/>
            <person name="Hara H."/>
            <person name="Tanase T.-O."/>
            <person name="Nomura Y."/>
            <person name="Togiya S."/>
            <person name="Komai F."/>
            <person name="Hara R."/>
            <person name="Takeuchi K."/>
            <person name="Arita M."/>
            <person name="Imose N."/>
            <person name="Musashino K."/>
            <person name="Yuuki H."/>
            <person name="Oshima A."/>
            <person name="Sasaki N."/>
            <person name="Aotsuka S."/>
            <person name="Yoshikawa Y."/>
            <person name="Matsunawa H."/>
            <person name="Ichihara T."/>
            <person name="Shiohata N."/>
            <person name="Sano S."/>
            <person name="Moriya S."/>
            <person name="Momiyama H."/>
            <person name="Satoh N."/>
            <person name="Takami S."/>
            <person name="Terashima Y."/>
            <person name="Suzuki O."/>
            <person name="Nakagawa S."/>
            <person name="Senoh A."/>
            <person name="Mizoguchi H."/>
            <person name="Goto Y."/>
            <person name="Shimizu F."/>
            <person name="Wakebe H."/>
            <person name="Hishigaki H."/>
            <person name="Watanabe T."/>
            <person name="Sugiyama A."/>
            <person name="Takemoto M."/>
            <person name="Kawakami B."/>
            <person name="Yamazaki M."/>
            <person name="Watanabe K."/>
            <person name="Kumagai A."/>
            <person name="Itakura S."/>
            <person name="Fukuzumi Y."/>
            <person name="Fujimori Y."/>
            <person name="Komiyama M."/>
            <person name="Tashiro H."/>
            <person name="Tanigami A."/>
            <person name="Fujiwara T."/>
            <person name="Ono T."/>
            <person name="Yamada K."/>
            <person name="Fujii Y."/>
            <person name="Ozaki K."/>
            <person name="Hirao M."/>
            <person name="Ohmori Y."/>
            <person name="Kawabata A."/>
            <person name="Hikiji T."/>
            <person name="Kobatake N."/>
            <person name="Inagaki H."/>
            <person name="Ikema Y."/>
            <person name="Okamoto S."/>
            <person name="Okitani R."/>
            <person name="Kawakami T."/>
            <person name="Noguchi S."/>
            <person name="Itoh T."/>
            <person name="Shigeta K."/>
            <person name="Senba T."/>
            <person name="Matsumura K."/>
            <person name="Nakajima Y."/>
            <person name="Mizuno T."/>
            <person name="Morinaga M."/>
            <person name="Sasaki M."/>
            <person name="Togashi T."/>
            <person name="Oyama M."/>
            <person name="Hata H."/>
            <person name="Watanabe M."/>
            <person name="Komatsu T."/>
            <person name="Mizushima-Sugano J."/>
            <person name="Satoh T."/>
            <person name="Shirai Y."/>
            <person name="Takahashi Y."/>
            <person name="Nakagawa K."/>
            <person name="Okumura K."/>
            <person name="Nagase T."/>
            <person name="Nomura N."/>
            <person name="Kikuchi H."/>
            <person name="Masuho Y."/>
            <person name="Yamashita R."/>
            <person name="Nakai K."/>
            <person name="Yada T."/>
            <person name="Nakamura Y."/>
            <person name="Ohara O."/>
            <person name="Isogai T."/>
            <person name="Sugano S."/>
        </authorList>
    </citation>
    <scope>NUCLEOTIDE SEQUENCE [LARGE SCALE MRNA]</scope>
</reference>
<reference key="2">
    <citation type="journal article" date="2001" name="Nature">
        <title>The DNA sequence and comparative analysis of human chromosome 20.</title>
        <authorList>
            <person name="Deloukas P."/>
            <person name="Matthews L.H."/>
            <person name="Ashurst J.L."/>
            <person name="Burton J."/>
            <person name="Gilbert J.G.R."/>
            <person name="Jones M."/>
            <person name="Stavrides G."/>
            <person name="Almeida J.P."/>
            <person name="Babbage A.K."/>
            <person name="Bagguley C.L."/>
            <person name="Bailey J."/>
            <person name="Barlow K.F."/>
            <person name="Bates K.N."/>
            <person name="Beard L.M."/>
            <person name="Beare D.M."/>
            <person name="Beasley O.P."/>
            <person name="Bird C.P."/>
            <person name="Blakey S.E."/>
            <person name="Bridgeman A.M."/>
            <person name="Brown A.J."/>
            <person name="Buck D."/>
            <person name="Burrill W.D."/>
            <person name="Butler A.P."/>
            <person name="Carder C."/>
            <person name="Carter N.P."/>
            <person name="Chapman J.C."/>
            <person name="Clamp M."/>
            <person name="Clark G."/>
            <person name="Clark L.N."/>
            <person name="Clark S.Y."/>
            <person name="Clee C.M."/>
            <person name="Clegg S."/>
            <person name="Cobley V.E."/>
            <person name="Collier R.E."/>
            <person name="Connor R.E."/>
            <person name="Corby N.R."/>
            <person name="Coulson A."/>
            <person name="Coville G.J."/>
            <person name="Deadman R."/>
            <person name="Dhami P.D."/>
            <person name="Dunn M."/>
            <person name="Ellington A.G."/>
            <person name="Frankland J.A."/>
            <person name="Fraser A."/>
            <person name="French L."/>
            <person name="Garner P."/>
            <person name="Grafham D.V."/>
            <person name="Griffiths C."/>
            <person name="Griffiths M.N.D."/>
            <person name="Gwilliam R."/>
            <person name="Hall R.E."/>
            <person name="Hammond S."/>
            <person name="Harley J.L."/>
            <person name="Heath P.D."/>
            <person name="Ho S."/>
            <person name="Holden J.L."/>
            <person name="Howden P.J."/>
            <person name="Huckle E."/>
            <person name="Hunt A.R."/>
            <person name="Hunt S.E."/>
            <person name="Jekosch K."/>
            <person name="Johnson C.M."/>
            <person name="Johnson D."/>
            <person name="Kay M.P."/>
            <person name="Kimberley A.M."/>
            <person name="King A."/>
            <person name="Knights A."/>
            <person name="Laird G.K."/>
            <person name="Lawlor S."/>
            <person name="Lehvaeslaiho M.H."/>
            <person name="Leversha M.A."/>
            <person name="Lloyd C."/>
            <person name="Lloyd D.M."/>
            <person name="Lovell J.D."/>
            <person name="Marsh V.L."/>
            <person name="Martin S.L."/>
            <person name="McConnachie L.J."/>
            <person name="McLay K."/>
            <person name="McMurray A.A."/>
            <person name="Milne S.A."/>
            <person name="Mistry D."/>
            <person name="Moore M.J.F."/>
            <person name="Mullikin J.C."/>
            <person name="Nickerson T."/>
            <person name="Oliver K."/>
            <person name="Parker A."/>
            <person name="Patel R."/>
            <person name="Pearce T.A.V."/>
            <person name="Peck A.I."/>
            <person name="Phillimore B.J.C.T."/>
            <person name="Prathalingam S.R."/>
            <person name="Plumb R.W."/>
            <person name="Ramsay H."/>
            <person name="Rice C.M."/>
            <person name="Ross M.T."/>
            <person name="Scott C.E."/>
            <person name="Sehra H.K."/>
            <person name="Shownkeen R."/>
            <person name="Sims S."/>
            <person name="Skuce C.D."/>
            <person name="Smith M.L."/>
            <person name="Soderlund C."/>
            <person name="Steward C.A."/>
            <person name="Sulston J.E."/>
            <person name="Swann R.M."/>
            <person name="Sycamore N."/>
            <person name="Taylor R."/>
            <person name="Tee L."/>
            <person name="Thomas D.W."/>
            <person name="Thorpe A."/>
            <person name="Tracey A."/>
            <person name="Tromans A.C."/>
            <person name="Vaudin M."/>
            <person name="Wall M."/>
            <person name="Wallis J.M."/>
            <person name="Whitehead S.L."/>
            <person name="Whittaker P."/>
            <person name="Willey D.L."/>
            <person name="Williams L."/>
            <person name="Williams S.A."/>
            <person name="Wilming L."/>
            <person name="Wray P.W."/>
            <person name="Hubbard T."/>
            <person name="Durbin R.M."/>
            <person name="Bentley D.R."/>
            <person name="Beck S."/>
            <person name="Rogers J."/>
        </authorList>
    </citation>
    <scope>NUCLEOTIDE SEQUENCE [LARGE SCALE GENOMIC DNA]</scope>
</reference>
<reference key="3">
    <citation type="journal article" date="2004" name="Genome Res.">
        <title>The status, quality, and expansion of the NIH full-length cDNA project: the Mammalian Gene Collection (MGC).</title>
        <authorList>
            <consortium name="The MGC Project Team"/>
        </authorList>
    </citation>
    <scope>NUCLEOTIDE SEQUENCE [LARGE SCALE MRNA]</scope>
</reference>